<comment type="function">
    <text evidence="3 5 6 8 9 10">Electrogenic antiporter that exchanges one cationic monoamine with two intravesicular protons across the membrane of secretory and synaptic vesicles. Uses the electrochemical proton gradient established by the V-type proton-pump ATPase to accumulate high concentrations of monoamines inside the vesicles prior to their release via exocytosis. Transports a variety of catecholamines such as dopamine, adrenaline and noradrenaline, histamine, and indolamines such as serotonin (PubMed:1438304, PubMed:25355561, PubMed:8125935, PubMed:8606801, PubMed:8860238). Regulates the transvesicular monoaminergic gradient that determines the quantal size. Mediates somatodendritic dopamine release in hippocampal neurons, likely as part of a regulated secretory pathway that integrates retrograde synaptic signals (PubMed:16301178). Acts as a primary transporter for striatal dopamine loading ensuring impulse-dependent release of dopamine at the synaptic cleft (By similarity). Responsible for histamine and serotonin storage and subsequent corelease from mast cell granules (By similarity) (PubMed:8860238).</text>
</comment>
<comment type="catalytic activity">
    <reaction evidence="5 7 8">
        <text>serotonin(in) + 2 H(+)(out) = serotonin(out) + 2 H(+)(in)</text>
        <dbReference type="Rhea" id="RHEA:73743"/>
        <dbReference type="ChEBI" id="CHEBI:15378"/>
        <dbReference type="ChEBI" id="CHEBI:350546"/>
    </reaction>
    <physiologicalReaction direction="left-to-right" evidence="14">
        <dbReference type="Rhea" id="RHEA:73744"/>
    </physiologicalReaction>
</comment>
<comment type="catalytic activity">
    <reaction evidence="8">
        <text>dopamine(in) + 2 H(+)(out) = dopamine(out) + 2 H(+)(in)</text>
        <dbReference type="Rhea" id="RHEA:73739"/>
        <dbReference type="ChEBI" id="CHEBI:15378"/>
        <dbReference type="ChEBI" id="CHEBI:59905"/>
    </reaction>
    <physiologicalReaction direction="left-to-right" evidence="14">
        <dbReference type="Rhea" id="RHEA:73740"/>
    </physiologicalReaction>
</comment>
<comment type="catalytic activity">
    <reaction evidence="9 10">
        <text>histamine(in) + 2 H(+)(out) = histamine(out) + 2 H(+)(in)</text>
        <dbReference type="Rhea" id="RHEA:73755"/>
        <dbReference type="ChEBI" id="CHEBI:15378"/>
        <dbReference type="ChEBI" id="CHEBI:58432"/>
    </reaction>
    <physiologicalReaction direction="left-to-right" evidence="15">
        <dbReference type="Rhea" id="RHEA:73756"/>
    </physiologicalReaction>
</comment>
<comment type="activity regulation">
    <text evidence="2 7 8 9">Strongly inhibited by reserpine and tetrabenazine (By similarity). Also inhibited to a lesser extent by ketanserin and fenfluramine (By similarity). Reserpine and ketanserin inhibit by blocking the substrate-binding pocket (By similarity). Tetrabenazine traps SLC18A2/VMAT2 in an occluded conformation and its inhibition is specific to SLC18A2/VMAT2 but not SLC18A1/VMAT1 (By similarity).</text>
</comment>
<comment type="biophysicochemical properties">
    <kinetics>
        <KM evidence="8">0.19 uM for serotonin</KM>
    </kinetics>
</comment>
<comment type="subunit">
    <text evidence="3">Interacts with SLC6A3.</text>
</comment>
<comment type="subcellular location">
    <subcellularLocation>
        <location evidence="6">Cytoplasmic vesicle</location>
        <location evidence="6">Secretory vesicle</location>
        <location evidence="6">Synaptic vesicle membrane</location>
        <topology evidence="4">Multi-pass membrane protein</topology>
    </subcellularLocation>
    <subcellularLocation>
        <location evidence="6">Cytoplasmic vesicle</location>
        <location evidence="6">Secretory vesicle membrane</location>
        <topology evidence="4">Multi-pass membrane protein</topology>
    </subcellularLocation>
    <subcellularLocation>
        <location evidence="6">Cell projection</location>
        <location evidence="6">Axon</location>
    </subcellularLocation>
    <subcellularLocation>
        <location evidence="6">Cell projection</location>
        <location evidence="6">Dendrite</location>
    </subcellularLocation>
    <text evidence="6">Sorted to large dense core granules in neuroendocrine cells, presumably at the level of the trans-Golgi network. In neurons it is predominantly detected in somatodendritic tubulovesicular membranes, a distinct population of secretory vesicles that undergo calcium-dependent exocytosis in axons and dendrites upon depolarization. Localized at synaptic vesicles in axons.</text>
</comment>
<comment type="tissue specificity">
    <text evidence="10">Expressed in the substantia nigra and the tuberomammillary nucleus of the posterior hypothalamus (PubMed:8860238). Expressed in stomach, in particular in varicose nerve fibers and enterochromaffin-like cells in the corpus region (at protein level) (PubMed:8860238).</text>
</comment>
<comment type="similarity">
    <text evidence="13">Belongs to the major facilitator superfamily. Vesicular transporter family.</text>
</comment>
<gene>
    <name type="primary">Slc18a2</name>
    <name evidence="12" type="synonym">Svat</name>
    <name type="synonym">Vmat2</name>
</gene>
<protein>
    <recommendedName>
        <fullName>Synaptic vesicular amine transporter</fullName>
    </recommendedName>
    <alternativeName>
        <fullName>Monoamine transporter</fullName>
    </alternativeName>
    <alternativeName>
        <fullName>Solute carrier family 18 member 2</fullName>
    </alternativeName>
    <alternativeName>
        <fullName>Vesicular amine transporter 2</fullName>
        <shortName>VAT2</shortName>
    </alternativeName>
    <alternativeName>
        <fullName evidence="2">Vesicular monoamine transporter 2</fullName>
    </alternativeName>
</protein>
<name>VMAT2_RAT</name>
<dbReference type="EMBL" id="M97381">
    <property type="protein sequence ID" value="AAA42190.1"/>
    <property type="molecule type" value="mRNA"/>
</dbReference>
<dbReference type="EMBL" id="L00603">
    <property type="protein sequence ID" value="AAA41627.1"/>
    <property type="molecule type" value="mRNA"/>
</dbReference>
<dbReference type="PIR" id="A46374">
    <property type="entry name" value="A46374"/>
</dbReference>
<dbReference type="RefSeq" id="NP_037163.1">
    <property type="nucleotide sequence ID" value="NM_013031.1"/>
</dbReference>
<dbReference type="RefSeq" id="XP_006231726.1">
    <property type="nucleotide sequence ID" value="XM_006231664.3"/>
</dbReference>
<dbReference type="RefSeq" id="XP_017444313.1">
    <property type="nucleotide sequence ID" value="XM_017588824.1"/>
</dbReference>
<dbReference type="SMR" id="Q01827"/>
<dbReference type="BioGRID" id="247580">
    <property type="interactions" value="2"/>
</dbReference>
<dbReference type="CORUM" id="Q01827"/>
<dbReference type="FunCoup" id="Q01827">
    <property type="interactions" value="209"/>
</dbReference>
<dbReference type="STRING" id="10116.ENSRNOP00000011983"/>
<dbReference type="BindingDB" id="Q01827"/>
<dbReference type="ChEMBL" id="CHEMBL4828"/>
<dbReference type="DrugCentral" id="Q01827"/>
<dbReference type="GuidetoPHARMACOLOGY" id="1012"/>
<dbReference type="GlyCosmos" id="Q01827">
    <property type="glycosylation" value="5 sites, No reported glycans"/>
</dbReference>
<dbReference type="GlyGen" id="Q01827">
    <property type="glycosylation" value="5 sites"/>
</dbReference>
<dbReference type="iPTMnet" id="Q01827"/>
<dbReference type="PhosphoSitePlus" id="Q01827"/>
<dbReference type="PaxDb" id="10116-ENSRNOP00000011983"/>
<dbReference type="ABCD" id="Q01827">
    <property type="antibodies" value="1 sequenced antibody"/>
</dbReference>
<dbReference type="GeneID" id="25549"/>
<dbReference type="KEGG" id="rno:25549"/>
<dbReference type="AGR" id="RGD:3694"/>
<dbReference type="CTD" id="6571"/>
<dbReference type="RGD" id="3694">
    <property type="gene designation" value="Slc18a2"/>
</dbReference>
<dbReference type="eggNOG" id="KOG3764">
    <property type="taxonomic scope" value="Eukaryota"/>
</dbReference>
<dbReference type="InParanoid" id="Q01827"/>
<dbReference type="OrthoDB" id="5086884at2759"/>
<dbReference type="PhylomeDB" id="Q01827"/>
<dbReference type="TreeFam" id="TF313494"/>
<dbReference type="Reactome" id="R-RNO-181429">
    <property type="pathway name" value="Serotonin Neurotransmitter Release Cycle"/>
</dbReference>
<dbReference type="Reactome" id="R-RNO-181430">
    <property type="pathway name" value="Norepinephrine Neurotransmitter Release Cycle"/>
</dbReference>
<dbReference type="Reactome" id="R-RNO-212676">
    <property type="pathway name" value="Dopamine Neurotransmitter Release Cycle"/>
</dbReference>
<dbReference type="Reactome" id="R-RNO-442660">
    <property type="pathway name" value="Na+/Cl- dependent neurotransmitter transporters"/>
</dbReference>
<dbReference type="PRO" id="PR:Q01827"/>
<dbReference type="Proteomes" id="UP000002494">
    <property type="component" value="Unplaced"/>
</dbReference>
<dbReference type="GO" id="GO:0030424">
    <property type="term" value="C:axon"/>
    <property type="evidence" value="ECO:0000314"/>
    <property type="project" value="UniProtKB"/>
</dbReference>
<dbReference type="GO" id="GO:0043679">
    <property type="term" value="C:axon terminus"/>
    <property type="evidence" value="ECO:0000314"/>
    <property type="project" value="RGD"/>
</dbReference>
<dbReference type="GO" id="GO:0044297">
    <property type="term" value="C:cell body"/>
    <property type="evidence" value="ECO:0000314"/>
    <property type="project" value="RGD"/>
</dbReference>
<dbReference type="GO" id="GO:0042995">
    <property type="term" value="C:cell projection"/>
    <property type="evidence" value="ECO:0000314"/>
    <property type="project" value="RGD"/>
</dbReference>
<dbReference type="GO" id="GO:0030425">
    <property type="term" value="C:dendrite"/>
    <property type="evidence" value="ECO:0000314"/>
    <property type="project" value="UniProtKB"/>
</dbReference>
<dbReference type="GO" id="GO:0031045">
    <property type="term" value="C:dense core granule"/>
    <property type="evidence" value="ECO:0000314"/>
    <property type="project" value="RGD"/>
</dbReference>
<dbReference type="GO" id="GO:0098691">
    <property type="term" value="C:dopaminergic synapse"/>
    <property type="evidence" value="ECO:0000314"/>
    <property type="project" value="SynGO"/>
</dbReference>
<dbReference type="GO" id="GO:0043025">
    <property type="term" value="C:neuronal cell body"/>
    <property type="evidence" value="ECO:0000314"/>
    <property type="project" value="RGD"/>
</dbReference>
<dbReference type="GO" id="GO:0098992">
    <property type="term" value="C:neuronal dense core vesicle"/>
    <property type="evidence" value="ECO:0000314"/>
    <property type="project" value="SynGO"/>
</dbReference>
<dbReference type="GO" id="GO:0099012">
    <property type="term" value="C:neuronal dense core vesicle membrane"/>
    <property type="evidence" value="ECO:0000314"/>
    <property type="project" value="SynGO"/>
</dbReference>
<dbReference type="GO" id="GO:0098794">
    <property type="term" value="C:postsynapse"/>
    <property type="evidence" value="ECO:0000314"/>
    <property type="project" value="SynGO"/>
</dbReference>
<dbReference type="GO" id="GO:0030667">
    <property type="term" value="C:secretory granule membrane"/>
    <property type="evidence" value="ECO:0000314"/>
    <property type="project" value="UniProtKB"/>
</dbReference>
<dbReference type="GO" id="GO:0008021">
    <property type="term" value="C:synaptic vesicle"/>
    <property type="evidence" value="ECO:0000314"/>
    <property type="project" value="RGD"/>
</dbReference>
<dbReference type="GO" id="GO:0030672">
    <property type="term" value="C:synaptic vesicle membrane"/>
    <property type="evidence" value="ECO:0000314"/>
    <property type="project" value="UniProtKB"/>
</dbReference>
<dbReference type="GO" id="GO:0043195">
    <property type="term" value="C:terminal bouton"/>
    <property type="evidence" value="ECO:0000314"/>
    <property type="project" value="RGD"/>
</dbReference>
<dbReference type="GO" id="GO:0005275">
    <property type="term" value="F:amine transmembrane transporter activity"/>
    <property type="evidence" value="ECO:0000314"/>
    <property type="project" value="RGD"/>
</dbReference>
<dbReference type="GO" id="GO:0019899">
    <property type="term" value="F:enzyme binding"/>
    <property type="evidence" value="ECO:0000353"/>
    <property type="project" value="RGD"/>
</dbReference>
<dbReference type="GO" id="GO:0031072">
    <property type="term" value="F:heat shock protein binding"/>
    <property type="evidence" value="ECO:0000353"/>
    <property type="project" value="RGD"/>
</dbReference>
<dbReference type="GO" id="GO:1901363">
    <property type="term" value="F:heterocyclic compound binding"/>
    <property type="evidence" value="ECO:0000353"/>
    <property type="project" value="RGD"/>
</dbReference>
<dbReference type="GO" id="GO:0015311">
    <property type="term" value="F:monoamine:proton antiporter activity"/>
    <property type="evidence" value="ECO:0000314"/>
    <property type="project" value="UniProtKB"/>
</dbReference>
<dbReference type="GO" id="GO:0005335">
    <property type="term" value="F:serotonin:sodium:chloride symporter activity"/>
    <property type="evidence" value="ECO:0000318"/>
    <property type="project" value="GO_Central"/>
</dbReference>
<dbReference type="GO" id="GO:0042910">
    <property type="term" value="F:xenobiotic transmembrane transporter activity"/>
    <property type="evidence" value="ECO:0007669"/>
    <property type="project" value="InterPro"/>
</dbReference>
<dbReference type="GO" id="GO:0015842">
    <property type="term" value="P:aminergic neurotransmitter loading into synaptic vesicle"/>
    <property type="evidence" value="ECO:0000315"/>
    <property type="project" value="RGD"/>
</dbReference>
<dbReference type="GO" id="GO:0071242">
    <property type="term" value="P:cellular response to ammonium ion"/>
    <property type="evidence" value="ECO:0000270"/>
    <property type="project" value="RGD"/>
</dbReference>
<dbReference type="GO" id="GO:0071466">
    <property type="term" value="P:cellular response to xenobiotic stimulus"/>
    <property type="evidence" value="ECO:0000315"/>
    <property type="project" value="RGD"/>
</dbReference>
<dbReference type="GO" id="GO:0032456">
    <property type="term" value="P:endocytic recycling"/>
    <property type="evidence" value="ECO:0000270"/>
    <property type="project" value="RGD"/>
</dbReference>
<dbReference type="GO" id="GO:0002553">
    <property type="term" value="P:histamine secretion by mast cell"/>
    <property type="evidence" value="ECO:0000266"/>
    <property type="project" value="RGD"/>
</dbReference>
<dbReference type="GO" id="GO:0051615">
    <property type="term" value="P:histamine uptake"/>
    <property type="evidence" value="ECO:0000314"/>
    <property type="project" value="UniProtKB"/>
</dbReference>
<dbReference type="GO" id="GO:0030073">
    <property type="term" value="P:insulin secretion"/>
    <property type="evidence" value="ECO:0000314"/>
    <property type="project" value="RGD"/>
</dbReference>
<dbReference type="GO" id="GO:0007626">
    <property type="term" value="P:locomotory behavior"/>
    <property type="evidence" value="ECO:0000266"/>
    <property type="project" value="RGD"/>
</dbReference>
<dbReference type="GO" id="GO:0015844">
    <property type="term" value="P:monoamine transport"/>
    <property type="evidence" value="ECO:0000314"/>
    <property type="project" value="RGD"/>
</dbReference>
<dbReference type="GO" id="GO:0051589">
    <property type="term" value="P:negative regulation of neurotransmitter transport"/>
    <property type="evidence" value="ECO:0000315"/>
    <property type="project" value="RGD"/>
</dbReference>
<dbReference type="GO" id="GO:0098700">
    <property type="term" value="P:neurotransmitter loading into synaptic vesicle"/>
    <property type="evidence" value="ECO:0000266"/>
    <property type="project" value="RGD"/>
</dbReference>
<dbReference type="GO" id="GO:0006836">
    <property type="term" value="P:neurotransmitter transport"/>
    <property type="evidence" value="ECO:0000314"/>
    <property type="project" value="RGD"/>
</dbReference>
<dbReference type="GO" id="GO:0009791">
    <property type="term" value="P:post-embryonic development"/>
    <property type="evidence" value="ECO:0000266"/>
    <property type="project" value="RGD"/>
</dbReference>
<dbReference type="GO" id="GO:0001975">
    <property type="term" value="P:response to amphetamine"/>
    <property type="evidence" value="ECO:0000270"/>
    <property type="project" value="RGD"/>
</dbReference>
<dbReference type="GO" id="GO:0042220">
    <property type="term" value="P:response to cocaine"/>
    <property type="evidence" value="ECO:0000270"/>
    <property type="project" value="RGD"/>
</dbReference>
<dbReference type="GO" id="GO:0051412">
    <property type="term" value="P:response to corticosterone"/>
    <property type="evidence" value="ECO:0000270"/>
    <property type="project" value="RGD"/>
</dbReference>
<dbReference type="GO" id="GO:0009635">
    <property type="term" value="P:response to herbicide"/>
    <property type="evidence" value="ECO:0000270"/>
    <property type="project" value="RGD"/>
</dbReference>
<dbReference type="GO" id="GO:0010038">
    <property type="term" value="P:response to metal ion"/>
    <property type="evidence" value="ECO:0000270"/>
    <property type="project" value="RGD"/>
</dbReference>
<dbReference type="GO" id="GO:0042594">
    <property type="term" value="P:response to starvation"/>
    <property type="evidence" value="ECO:0000270"/>
    <property type="project" value="RGD"/>
</dbReference>
<dbReference type="GO" id="GO:0009636">
    <property type="term" value="P:response to toxic substance"/>
    <property type="evidence" value="ECO:0000266"/>
    <property type="project" value="RGD"/>
</dbReference>
<dbReference type="GO" id="GO:0009410">
    <property type="term" value="P:response to xenobiotic stimulus"/>
    <property type="evidence" value="ECO:0000270"/>
    <property type="project" value="RGD"/>
</dbReference>
<dbReference type="GO" id="GO:0010043">
    <property type="term" value="P:response to zinc ion"/>
    <property type="evidence" value="ECO:0000270"/>
    <property type="project" value="RGD"/>
</dbReference>
<dbReference type="GO" id="GO:0002552">
    <property type="term" value="P:serotonin secretion by mast cell"/>
    <property type="evidence" value="ECO:0000266"/>
    <property type="project" value="RGD"/>
</dbReference>
<dbReference type="GO" id="GO:0051610">
    <property type="term" value="P:serotonin uptake"/>
    <property type="evidence" value="ECO:0000314"/>
    <property type="project" value="UniProtKB"/>
</dbReference>
<dbReference type="GO" id="GO:0099123">
    <property type="term" value="P:somato-dendritic dopamine secretion"/>
    <property type="evidence" value="ECO:0000314"/>
    <property type="project" value="UniProtKB"/>
</dbReference>
<dbReference type="CDD" id="cd17384">
    <property type="entry name" value="MFS_SLC18A1_2_VAT1_2"/>
    <property type="match status" value="1"/>
</dbReference>
<dbReference type="FunFam" id="1.20.1250.20:FF:000083">
    <property type="entry name" value="synaptic vesicular amine transporter isoform X1"/>
    <property type="match status" value="1"/>
</dbReference>
<dbReference type="FunFam" id="1.20.1250.20:FF:000116">
    <property type="entry name" value="synaptic vesicular amine transporter isoform X2"/>
    <property type="match status" value="1"/>
</dbReference>
<dbReference type="Gene3D" id="1.20.1250.20">
    <property type="entry name" value="MFS general substrate transporter like domains"/>
    <property type="match status" value="2"/>
</dbReference>
<dbReference type="InterPro" id="IPR011701">
    <property type="entry name" value="MFS"/>
</dbReference>
<dbReference type="InterPro" id="IPR020846">
    <property type="entry name" value="MFS_dom"/>
</dbReference>
<dbReference type="InterPro" id="IPR036259">
    <property type="entry name" value="MFS_trans_sf"/>
</dbReference>
<dbReference type="InterPro" id="IPR050930">
    <property type="entry name" value="MFS_Vesicular_Transporter"/>
</dbReference>
<dbReference type="InterPro" id="IPR004734">
    <property type="entry name" value="Multidrug-R"/>
</dbReference>
<dbReference type="NCBIfam" id="TIGR00880">
    <property type="entry name" value="2_A_01_02"/>
    <property type="match status" value="1"/>
</dbReference>
<dbReference type="PANTHER" id="PTHR23506">
    <property type="entry name" value="GH10249P"/>
    <property type="match status" value="1"/>
</dbReference>
<dbReference type="PANTHER" id="PTHR23506:SF30">
    <property type="entry name" value="SYNAPTIC VESICULAR AMINE TRANSPORTER"/>
    <property type="match status" value="1"/>
</dbReference>
<dbReference type="Pfam" id="PF07690">
    <property type="entry name" value="MFS_1"/>
    <property type="match status" value="1"/>
</dbReference>
<dbReference type="SUPFAM" id="SSF103473">
    <property type="entry name" value="MFS general substrate transporter"/>
    <property type="match status" value="1"/>
</dbReference>
<dbReference type="PROSITE" id="PS50850">
    <property type="entry name" value="MFS"/>
    <property type="match status" value="1"/>
</dbReference>
<evidence type="ECO:0000250" key="1"/>
<evidence type="ECO:0000250" key="2">
    <source>
        <dbReference type="UniProtKB" id="Q05940"/>
    </source>
</evidence>
<evidence type="ECO:0000250" key="3">
    <source>
        <dbReference type="UniProtKB" id="Q8BRU6"/>
    </source>
</evidence>
<evidence type="ECO:0000255" key="4"/>
<evidence type="ECO:0000269" key="5">
    <source>
    </source>
</evidence>
<evidence type="ECO:0000269" key="6">
    <source>
    </source>
</evidence>
<evidence type="ECO:0000269" key="7">
    <source>
    </source>
</evidence>
<evidence type="ECO:0000269" key="8">
    <source>
    </source>
</evidence>
<evidence type="ECO:0000269" key="9">
    <source>
    </source>
</evidence>
<evidence type="ECO:0000269" key="10">
    <source>
    </source>
</evidence>
<evidence type="ECO:0000269" key="11">
    <source>
    </source>
</evidence>
<evidence type="ECO:0000303" key="12">
    <source>
    </source>
</evidence>
<evidence type="ECO:0000305" key="13"/>
<evidence type="ECO:0000305" key="14">
    <source>
    </source>
</evidence>
<evidence type="ECO:0000305" key="15">
    <source>
    </source>
</evidence>
<evidence type="ECO:0007744" key="16">
    <source>
    </source>
</evidence>
<feature type="chain" id="PRO_0000127516" description="Synaptic vesicular amine transporter">
    <location>
        <begin position="1"/>
        <end position="515"/>
    </location>
</feature>
<feature type="topological domain" description="Cytoplasmic" evidence="2">
    <location>
        <begin position="1"/>
        <end position="20"/>
    </location>
</feature>
<feature type="transmembrane region" description="Helical; Name=1" evidence="2">
    <location>
        <begin position="21"/>
        <end position="41"/>
    </location>
</feature>
<feature type="topological domain" description="Lumenal, vesicle" evidence="2">
    <location>
        <begin position="42"/>
        <end position="130"/>
    </location>
</feature>
<feature type="transmembrane region" description="Helical; Name=2" evidence="2">
    <location>
        <begin position="131"/>
        <end position="151"/>
    </location>
</feature>
<feature type="topological domain" description="Cytoplasmic" evidence="2">
    <location>
        <begin position="152"/>
        <end position="160"/>
    </location>
</feature>
<feature type="transmembrane region" description="Helical; Name=3" evidence="2">
    <location>
        <begin position="161"/>
        <end position="181"/>
    </location>
</feature>
<feature type="topological domain" description="Lumenal, vesicle" evidence="2">
    <location>
        <begin position="182"/>
        <end position="190"/>
    </location>
</feature>
<feature type="transmembrane region" description="Helical; Name=4" evidence="2">
    <location>
        <begin position="191"/>
        <end position="211"/>
    </location>
</feature>
<feature type="topological domain" description="Cytoplasmic" evidence="2">
    <location>
        <begin position="212"/>
        <end position="220"/>
    </location>
</feature>
<feature type="transmembrane region" description="Helical; Name=5" evidence="2">
    <location>
        <begin position="221"/>
        <end position="243"/>
    </location>
</feature>
<feature type="topological domain" description="Lumenal, vesicle" evidence="2">
    <location>
        <begin position="244"/>
        <end position="249"/>
    </location>
</feature>
<feature type="transmembrane region" description="Helical; Name=6" evidence="2">
    <location>
        <begin position="250"/>
        <end position="272"/>
    </location>
</feature>
<feature type="topological domain" description="Cytoplasmic" evidence="2">
    <location>
        <begin position="273"/>
        <end position="292"/>
    </location>
</feature>
<feature type="transmembrane region" description="Helical; Name=7" evidence="2">
    <location>
        <begin position="293"/>
        <end position="312"/>
    </location>
</feature>
<feature type="topological domain" description="Lumenal, vesicle" evidence="2">
    <location>
        <begin position="313"/>
        <end position="329"/>
    </location>
</feature>
<feature type="transmembrane region" description="Helical; Name=8" evidence="2">
    <location>
        <begin position="330"/>
        <end position="353"/>
    </location>
</feature>
<feature type="topological domain" description="Cytoplasmic" evidence="2">
    <location>
        <begin position="354"/>
        <end position="358"/>
    </location>
</feature>
<feature type="transmembrane region" description="Helical; Name=9" evidence="2">
    <location>
        <begin position="359"/>
        <end position="379"/>
    </location>
</feature>
<feature type="topological domain" description="Lumenal, vesicle" evidence="2">
    <location>
        <begin position="380"/>
        <end position="390"/>
    </location>
</feature>
<feature type="transmembrane region" description="Helical; Name=10" evidence="2">
    <location>
        <begin position="391"/>
        <end position="411"/>
    </location>
</feature>
<feature type="topological domain" description="Cytoplasmic" evidence="2">
    <location>
        <begin position="412"/>
        <end position="415"/>
    </location>
</feature>
<feature type="transmembrane region" description="Helical; Name=11" evidence="2">
    <location>
        <begin position="416"/>
        <end position="436"/>
    </location>
</feature>
<feature type="topological domain" description="Lumenal, vesicle" evidence="2">
    <location>
        <begin position="437"/>
        <end position="441"/>
    </location>
</feature>
<feature type="transmembrane region" description="Helical; Name=12" evidence="2">
    <location>
        <begin position="442"/>
        <end position="463"/>
    </location>
</feature>
<feature type="topological domain" description="Cytoplasmic" evidence="2">
    <location>
        <begin position="464"/>
        <end position="515"/>
    </location>
</feature>
<feature type="binding site" evidence="2">
    <location>
        <position position="229"/>
    </location>
    <ligand>
        <name>serotonin</name>
        <dbReference type="ChEBI" id="CHEBI:350546"/>
    </ligand>
</feature>
<feature type="binding site" evidence="2">
    <location>
        <position position="233"/>
    </location>
    <ligand>
        <name>serotonin</name>
        <dbReference type="ChEBI" id="CHEBI:350546"/>
    </ligand>
</feature>
<feature type="binding site" evidence="2">
    <location>
        <position position="306"/>
    </location>
    <ligand>
        <name>serotonin</name>
        <dbReference type="ChEBI" id="CHEBI:350546"/>
    </ligand>
</feature>
<feature type="binding site" evidence="2">
    <location>
        <position position="309"/>
    </location>
    <ligand>
        <name>serotonin</name>
        <dbReference type="ChEBI" id="CHEBI:350546"/>
    </ligand>
</feature>
<feature type="binding site" evidence="2">
    <location>
        <position position="313"/>
    </location>
    <ligand>
        <name>serotonin</name>
        <dbReference type="ChEBI" id="CHEBI:350546"/>
    </ligand>
</feature>
<feature type="binding site" evidence="2">
    <location>
        <position position="335"/>
    </location>
    <ligand>
        <name>serotonin</name>
        <dbReference type="ChEBI" id="CHEBI:350546"/>
    </ligand>
</feature>
<feature type="binding site" evidence="2">
    <location>
        <position position="342"/>
    </location>
    <ligand>
        <name>serotonin</name>
        <dbReference type="ChEBI" id="CHEBI:350546"/>
    </ligand>
</feature>
<feature type="binding site" evidence="2">
    <location>
        <position position="400"/>
    </location>
    <ligand>
        <name>serotonin</name>
        <dbReference type="ChEBI" id="CHEBI:350546"/>
    </ligand>
</feature>
<feature type="binding site" evidence="2">
    <location>
        <position position="434"/>
    </location>
    <ligand>
        <name>serotonin</name>
        <dbReference type="ChEBI" id="CHEBI:350546"/>
    </ligand>
</feature>
<feature type="modified residue" description="Phosphoserine; by CK2" evidence="11 16">
    <location>
        <position position="512"/>
    </location>
</feature>
<feature type="modified residue" description="Phosphoserine; by CK2" evidence="11 16">
    <location>
        <position position="514"/>
    </location>
</feature>
<feature type="glycosylation site" description="N-linked (GlcNAc...) asparagine" evidence="4">
    <location>
        <position position="56"/>
    </location>
</feature>
<feature type="glycosylation site" description="N-linked (GlcNAc...) asparagine" evidence="4">
    <location>
        <position position="80"/>
    </location>
</feature>
<feature type="glycosylation site" description="N-linked (GlcNAc...) asparagine" evidence="4">
    <location>
        <position position="81"/>
    </location>
</feature>
<feature type="glycosylation site" description="N-linked (GlcNAc...) asparagine" evidence="4">
    <location>
        <position position="89"/>
    </location>
</feature>
<feature type="glycosylation site" description="N-linked (GlcNAc...) asparagine" evidence="4">
    <location>
        <position position="111"/>
    </location>
</feature>
<feature type="disulfide bond" evidence="1">
    <location>
        <begin position="118"/>
        <end position="325"/>
    </location>
</feature>
<feature type="mutagenesis site" description="Loss of activity. Abolishes histamine uptake." evidence="9">
    <original>SSS</original>
    <variation>AAA</variation>
    <location>
        <begin position="180"/>
        <end position="182"/>
    </location>
</feature>
<feature type="mutagenesis site" description="Does not alter sorting to large dense granules." evidence="6">
    <original>K</original>
    <variation>A</variation>
    <location>
        <position position="477"/>
    </location>
</feature>
<feature type="mutagenesis site" description="Impairs sorting to large dense granules. Delivered to the plasma membrane instead. Abolishes exocytosis in dendrites. Reduces exocytosis in axons." evidence="6">
    <original>EE</original>
    <variation>AA</variation>
    <location>
        <begin position="478"/>
        <end position="479"/>
    </location>
</feature>
<feature type="mutagenesis site" description="Does not alter sorting to large dense granules." evidence="6">
    <original>K</original>
    <variation>A</variation>
    <location>
        <position position="480"/>
    </location>
</feature>
<feature type="mutagenesis site" description="Does not alter sorting to large dense granules." evidence="6">
    <original>M</original>
    <variation>A</variation>
    <location>
        <position position="481"/>
    </location>
</feature>
<feature type="mutagenesis site" description="Impairs sorting to large dense granules. Delivered to the plasma membrane instead." evidence="6">
    <original>IL</original>
    <variation>AA</variation>
    <location>
        <begin position="483"/>
        <end position="484"/>
    </location>
</feature>
<feature type="sequence conflict" description="In Ref. 2; AAA41627." evidence="13" ref="2">
    <original>KP</original>
    <variation>NA</variation>
    <location>
        <begin position="220"/>
        <end position="221"/>
    </location>
</feature>
<feature type="sequence conflict" description="In Ref. 1; AAA42190." evidence="13" ref="1">
    <original>G</original>
    <variation>F</variation>
    <location>
        <position position="397"/>
    </location>
</feature>
<feature type="sequence conflict" description="In Ref. 2; AAA41627." evidence="13" ref="2">
    <original>R</original>
    <variation>T</variation>
    <location>
        <position position="493"/>
    </location>
</feature>
<reference key="1">
    <citation type="journal article" date="1992" name="Cell">
        <title>A cDNA that suppresses MPP+ toxicity encodes a vesicular amine transporter.</title>
        <authorList>
            <person name="Liu Y."/>
            <person name="Peter D."/>
            <person name="Roghani A."/>
            <person name="Schuldiner S."/>
            <person name="Prive G.G."/>
            <person name="Eisenberg D."/>
            <person name="Brecha N."/>
            <person name="Edwards R.H."/>
        </authorList>
    </citation>
    <scope>NUCLEOTIDE SEQUENCE [MRNA]</scope>
</reference>
<reference key="2">
    <citation type="journal article" date="1992" name="Proc. Natl. Acad. Sci. U.S.A.">
        <title>Expression cloning of a reserpine-sensitive vesicular monoamine transporter.</title>
        <authorList>
            <person name="Erickson J.D."/>
            <person name="Eiden L.E."/>
            <person name="Hoffman B.J."/>
        </authorList>
    </citation>
    <scope>NUCLEOTIDE SEQUENCE [MRNA]</scope>
    <scope>FUNCTION</scope>
    <scope>TRANSPORT ACTIVITY</scope>
</reference>
<reference key="3">
    <citation type="journal article" date="1996" name="J. Physiol. (Lond.)">
        <title>Expression and regulation of a vesicular monoamine transporter in rat stomach: a putative histamine transporter.</title>
        <authorList>
            <person name="Dimaline R."/>
            <person name="Struthers J."/>
        </authorList>
    </citation>
    <scope>NUCLEOTIDE SEQUENCE [MRNA]</scope>
    <source>
        <strain>Wistar</strain>
        <tissue>Gastric corpus</tissue>
    </source>
</reference>
<reference key="4">
    <citation type="journal article" date="1994" name="J. Biol. Chem.">
        <title>The chromaffin granule and synaptic vesicle amine transporters differ in substrate recognition and sensitivity to inhibitors.</title>
        <authorList>
            <person name="Peter D."/>
            <person name="Jimenez J."/>
            <person name="Liu Y."/>
            <person name="Kim J."/>
            <person name="Edwards R.H."/>
        </authorList>
    </citation>
    <scope>FUNCTION</scope>
    <scope>TRANSPORT ACTIVITY</scope>
    <scope>BIOPHYSICOCHEMICAL PROPERTIES</scope>
    <scope>ACTIVITY REGULATION</scope>
</reference>
<reference key="5">
    <citation type="journal article" date="1995" name="J. Mol. Neurosci.">
        <title>Reserpine- and tetrabenazine-sensitive transport of (3)H-histamine by the neuronal isoform of the vesicular monoamine transporter.</title>
        <authorList>
            <person name="Erickson J.D."/>
            <person name="Eiden L.E."/>
            <person name="Schafer M.K."/>
            <person name="Weihe E."/>
        </authorList>
    </citation>
    <scope>FUNCTION</scope>
    <scope>TRANSPORT ACTIVITY</scope>
    <scope>TISSUE SPECIFICITY</scope>
</reference>
<reference key="6">
    <citation type="journal article" date="1995" name="Neuropharmacology">
        <title>Transport of histamine by vesicular monoamine transporter-2.</title>
        <authorList>
            <person name="Merickel A."/>
            <person name="Edwards R.H."/>
        </authorList>
    </citation>
    <scope>FUNCTION</scope>
    <scope>TRANSPORT ACTIVITY</scope>
    <scope>ACTIVITY REGULATION</scope>
    <scope>MUTAGENESIS OF 180-SER--SER-182</scope>
</reference>
<reference key="7">
    <citation type="journal article" date="1997" name="J. Biol. Chem.">
        <title>Phosphorylation of a vesicular monoamine transporter by casein kinase II.</title>
        <authorList>
            <person name="Krantz D.E."/>
            <person name="Peter D."/>
            <person name="Lui Y."/>
            <person name="Edwards R.H."/>
        </authorList>
    </citation>
    <scope>PHOSPHORYLATION AT SER-512 AND SER-514</scope>
</reference>
<reference key="8">
    <citation type="journal article" date="2005" name="Neuron">
        <title>Sorting of vesicular monoamine transporter 2 to the regulated secretory pathway confers the somatodendritic exocytosis of monoamines.</title>
        <authorList>
            <person name="Li H."/>
            <person name="Waites C.L."/>
            <person name="Staal R.G."/>
            <person name="Dobryy Y."/>
            <person name="Park J."/>
            <person name="Sulzer D.L."/>
            <person name="Edwards R.H."/>
        </authorList>
    </citation>
    <scope>FUNCTION</scope>
    <scope>SUBCELLULAR LOCATION</scope>
    <scope>MUTAGENESIS OF LYS-477; 478-GLU-GLU-479; LYS-480; MET-481 AND 483-ILE-LEU-484</scope>
</reference>
<reference key="9">
    <citation type="journal article" date="2012" name="Nat. Commun.">
        <title>Quantitative maps of protein phosphorylation sites across 14 different rat organs and tissues.</title>
        <authorList>
            <person name="Lundby A."/>
            <person name="Secher A."/>
            <person name="Lage K."/>
            <person name="Nordsborg N.B."/>
            <person name="Dmytriyev A."/>
            <person name="Lundby C."/>
            <person name="Olsen J.V."/>
        </authorList>
    </citation>
    <scope>PHOSPHORYLATION [LARGE SCALE ANALYSIS] AT SER-512 AND SER-514</scope>
    <scope>IDENTIFICATION BY MASS SPECTROMETRY [LARGE SCALE ANALYSIS]</scope>
</reference>
<reference key="10">
    <citation type="journal article" date="2014" name="Sci. Rep.">
        <title>Identification of a mammalian vesicular polyamine transporter.</title>
        <authorList>
            <person name="Hiasa M."/>
            <person name="Miyaji T."/>
            <person name="Haruna Y."/>
            <person name="Takeuchi T."/>
            <person name="Harada Y."/>
            <person name="Moriyama S."/>
            <person name="Yamamoto A."/>
            <person name="Omote H."/>
            <person name="Moriyama Y."/>
        </authorList>
    </citation>
    <scope>FUNCTION</scope>
    <scope>TRANSPORT ACTIVITY</scope>
    <scope>ACTIVITY REGULATION</scope>
</reference>
<organism>
    <name type="scientific">Rattus norvegicus</name>
    <name type="common">Rat</name>
    <dbReference type="NCBI Taxonomy" id="10116"/>
    <lineage>
        <taxon>Eukaryota</taxon>
        <taxon>Metazoa</taxon>
        <taxon>Chordata</taxon>
        <taxon>Craniata</taxon>
        <taxon>Vertebrata</taxon>
        <taxon>Euteleostomi</taxon>
        <taxon>Mammalia</taxon>
        <taxon>Eutheria</taxon>
        <taxon>Euarchontoglires</taxon>
        <taxon>Glires</taxon>
        <taxon>Rodentia</taxon>
        <taxon>Myomorpha</taxon>
        <taxon>Muroidea</taxon>
        <taxon>Muridae</taxon>
        <taxon>Murinae</taxon>
        <taxon>Rattus</taxon>
    </lineage>
</organism>
<keyword id="KW-0966">Cell projection</keyword>
<keyword id="KW-0968">Cytoplasmic vesicle</keyword>
<keyword id="KW-1015">Disulfide bond</keyword>
<keyword id="KW-0325">Glycoprotein</keyword>
<keyword id="KW-0472">Membrane</keyword>
<keyword id="KW-0532">Neurotransmitter transport</keyword>
<keyword id="KW-0597">Phosphoprotein</keyword>
<keyword id="KW-1185">Reference proteome</keyword>
<keyword id="KW-0770">Synapse</keyword>
<keyword id="KW-0812">Transmembrane</keyword>
<keyword id="KW-1133">Transmembrane helix</keyword>
<keyword id="KW-0813">Transport</keyword>
<sequence length="515" mass="55690">MALSDLVLLRWLRDSRHSRKLILFIVFLALLLDNMLLTVVVPIIPSYLYSIKHEKNSTEIQTTRPELVVSTSESIFSYYNNSTVLITGNATGTLPGGQSHKATSTQHTVANTTVPSDCPSEDRDLLNENVQVGLLFASKATVQLLTNPFIGLLTNRIGYPIPMFAGFCIMFISTVMFAFSSSYAFLLIARSLQGIGSSCSSVAGMGMLASVYTDDEERGKPMGIALGGLAMGVLVGPPFGSVLYEFVGKTAPFLVLAALVLLDGAIQLFVLQPSRVQPESQKGTPLTTLLKDPYILIAAGSICFANMGIAMLEPALPIWMMETMCSRKWQLGVAFLPASISYLIGTNIFGILAHKMGRWLCALLGMVIVGISILCIPFAKNIYGLIAPNFGVGFAIGMVDSSMMPIMGYLVDLRHVSVYGSVYAIADVAFCMGYAIGPSAGGAIAKAIGFPWLMTIIGIIDIAFAPLCFFLRSPPAKEEKMAILMDHNCPIKRKMYTQNNVQSYPIGDDEESESD</sequence>
<proteinExistence type="evidence at protein level"/>
<accession>Q01827</accession>
<accession>Q9QVP1</accession>